<organismHost>
    <name type="scientific">Acanthamoeba polyphaga</name>
    <name type="common">Amoeba</name>
    <dbReference type="NCBI Taxonomy" id="5757"/>
</organismHost>
<gene>
    <name type="ordered locus">MIMI_R424</name>
</gene>
<reference key="1">
    <citation type="journal article" date="2004" name="Science">
        <title>The 1.2-megabase genome sequence of Mimivirus.</title>
        <authorList>
            <person name="Raoult D."/>
            <person name="Audic S."/>
            <person name="Robert C."/>
            <person name="Abergel C."/>
            <person name="Renesto P."/>
            <person name="Ogata H."/>
            <person name="La Scola B."/>
            <person name="Susan M."/>
            <person name="Claverie J.-M."/>
        </authorList>
    </citation>
    <scope>NUCLEOTIDE SEQUENCE [LARGE SCALE GENOMIC DNA]</scope>
    <source>
        <strain>Rowbotham-Bradford</strain>
    </source>
</reference>
<accession>Q5UQL8</accession>
<keyword id="KW-1185">Reference proteome</keyword>
<organism>
    <name type="scientific">Acanthamoeba polyphaga mimivirus</name>
    <name type="common">APMV</name>
    <dbReference type="NCBI Taxonomy" id="212035"/>
    <lineage>
        <taxon>Viruses</taxon>
        <taxon>Varidnaviria</taxon>
        <taxon>Bamfordvirae</taxon>
        <taxon>Nucleocytoviricota</taxon>
        <taxon>Megaviricetes</taxon>
        <taxon>Imitervirales</taxon>
        <taxon>Mimiviridae</taxon>
        <taxon>Megamimivirinae</taxon>
        <taxon>Mimivirus</taxon>
        <taxon>Mimivirus bradfordmassiliense</taxon>
    </lineage>
</organism>
<name>YR424_MIMIV</name>
<protein>
    <recommendedName>
        <fullName>Uncharacterized protein R424</fullName>
    </recommendedName>
</protein>
<dbReference type="EMBL" id="AY653733">
    <property type="protein sequence ID" value="AAV50693.1"/>
    <property type="molecule type" value="Genomic_DNA"/>
</dbReference>
<dbReference type="SMR" id="Q5UQL8"/>
<dbReference type="KEGG" id="vg:9925045"/>
<dbReference type="OrthoDB" id="36047at10239"/>
<dbReference type="Proteomes" id="UP000001134">
    <property type="component" value="Genome"/>
</dbReference>
<feature type="chain" id="PRO_0000251118" description="Uncharacterized protein R424">
    <location>
        <begin position="1"/>
        <end position="342"/>
    </location>
</feature>
<sequence>MKNDYQIVTYNKTNYYVFRYVKTQESEKLFVIDEDDFDIIMSTGLSFYGIHSYIGHNITINDEQYTAYLHDYIVRDGDISSLVHHINHNTHDNRKVNLISVPKDEFELYQPKYHRTIELPKKCGINENQIPKFVHYVSKTKKHSDKFVFKMNIIGKDKPLIYQSSESKDISTFDKYVQIVEIILKLNNQYPEYFINKGIIENYSDNSLQLMKEYNEIISLTSYDCVKKNIMDIPKKFKLESLMSKASIKVQQYLETVDLTKKTGKNIKSNLPKGCGVTLDMIPKHCYYRPANEKTGDSFRIDRKHPLIVNGKELSTTSKKKVSTKDKFDELIKLLETLDNKH</sequence>
<proteinExistence type="predicted"/>